<keyword id="KW-0002">3D-structure</keyword>
<keyword id="KW-0507">mRNA processing</keyword>
<keyword id="KW-0508">mRNA splicing</keyword>
<keyword id="KW-0539">Nucleus</keyword>
<keyword id="KW-1185">Reference proteome</keyword>
<keyword id="KW-0677">Repeat</keyword>
<keyword id="KW-0687">Ribonucleoprotein</keyword>
<keyword id="KW-0694">RNA-binding</keyword>
<keyword id="KW-0747">Spliceosome</keyword>
<comment type="function">
    <text evidence="1 5">Binds stem loop II of U1 snRNA. It is the first snRNP to interact with pre-mRNA. This interaction is required for the subsequent binding of U2 snRNP and the U4/U6/U5 tri-snRNP (By similarity). Plays a role in regulating sex-lethal splicing.</text>
</comment>
<comment type="subunit">
    <text evidence="4">Belongs to the spliceosome where it is associated with snRNP U1. Interacts with the SMN complex.</text>
</comment>
<comment type="interaction">
    <interactant intactId="EBI-174177">
        <id>P43332</id>
    </interactant>
    <interactant intactId="EBI-131989">
        <id>Q9V3N8</id>
        <label>Thg</label>
    </interactant>
    <organismsDiffer>false</organismsDiffer>
    <experiments>3</experiments>
</comment>
<comment type="interaction">
    <interactant intactId="EBI-174177">
        <id>P43332</id>
    </interactant>
    <interactant intactId="EBI-130179">
        <id>Q9V4Q8</id>
        <label>U2A</label>
    </interactant>
    <organismsDiffer>false</organismsDiffer>
    <experiments>3</experiments>
</comment>
<comment type="subcellular location">
    <subcellularLocation>
        <location>Nucleus</location>
    </subcellularLocation>
</comment>
<comment type="similarity">
    <text evidence="6">Belongs to the RRM U1 A/B'' family.</text>
</comment>
<name>SNRPA_DROME</name>
<accession>P43332</accession>
<accession>Q9W4D7</accession>
<protein>
    <recommendedName>
        <fullName>U1 small nuclear ribonucleoprotein A</fullName>
        <shortName>U1 snRNP A</shortName>
        <shortName>U1-A</shortName>
        <shortName>U1A</shortName>
    </recommendedName>
    <alternativeName>
        <fullName>Sex determination protein snf</fullName>
    </alternativeName>
</protein>
<organism>
    <name type="scientific">Drosophila melanogaster</name>
    <name type="common">Fruit fly</name>
    <dbReference type="NCBI Taxonomy" id="7227"/>
    <lineage>
        <taxon>Eukaryota</taxon>
        <taxon>Metazoa</taxon>
        <taxon>Ecdysozoa</taxon>
        <taxon>Arthropoda</taxon>
        <taxon>Hexapoda</taxon>
        <taxon>Insecta</taxon>
        <taxon>Pterygota</taxon>
        <taxon>Neoptera</taxon>
        <taxon>Endopterygota</taxon>
        <taxon>Diptera</taxon>
        <taxon>Brachycera</taxon>
        <taxon>Muscomorpha</taxon>
        <taxon>Ephydroidea</taxon>
        <taxon>Drosophilidae</taxon>
        <taxon>Drosophila</taxon>
        <taxon>Sophophora</taxon>
    </lineage>
</organism>
<feature type="chain" id="PRO_0000081890" description="U1 small nuclear ribonucleoprotein A">
    <location>
        <begin position="1"/>
        <end position="216"/>
    </location>
</feature>
<feature type="domain" description="RRM 1" evidence="2">
    <location>
        <begin position="7"/>
        <end position="86"/>
    </location>
</feature>
<feature type="domain" description="RRM 2" evidence="2">
    <location>
        <begin position="142"/>
        <end position="216"/>
    </location>
</feature>
<feature type="region of interest" description="Disordered" evidence="3">
    <location>
        <begin position="97"/>
        <end position="142"/>
    </location>
</feature>
<feature type="compositionally biased region" description="Polar residues" evidence="3">
    <location>
        <begin position="126"/>
        <end position="142"/>
    </location>
</feature>
<feature type="sequence variant" description="In allele SNF1621; sterile.">
    <original>R</original>
    <variation>H</variation>
    <location>
        <position position="49"/>
    </location>
</feature>
<feature type="strand" evidence="9">
    <location>
        <begin position="7"/>
        <end position="13"/>
    </location>
</feature>
<feature type="helix" evidence="9">
    <location>
        <begin position="20"/>
        <end position="31"/>
    </location>
</feature>
<feature type="turn" evidence="9">
    <location>
        <begin position="32"/>
        <end position="34"/>
    </location>
</feature>
<feature type="strand" evidence="9">
    <location>
        <begin position="37"/>
        <end position="41"/>
    </location>
</feature>
<feature type="strand" evidence="9">
    <location>
        <begin position="44"/>
        <end position="46"/>
    </location>
</feature>
<feature type="turn" evidence="9">
    <location>
        <begin position="47"/>
        <end position="50"/>
    </location>
</feature>
<feature type="strand" evidence="9">
    <location>
        <begin position="52"/>
        <end position="58"/>
    </location>
</feature>
<feature type="helix" evidence="9">
    <location>
        <begin position="59"/>
        <end position="69"/>
    </location>
</feature>
<feature type="strand" evidence="8">
    <location>
        <begin position="73"/>
        <end position="78"/>
    </location>
</feature>
<feature type="strand" evidence="9">
    <location>
        <begin position="80"/>
        <end position="83"/>
    </location>
</feature>
<feature type="helix" evidence="9">
    <location>
        <begin position="87"/>
        <end position="94"/>
    </location>
</feature>
<feature type="strand" evidence="7">
    <location>
        <begin position="142"/>
        <end position="148"/>
    </location>
</feature>
<feature type="helix" evidence="7">
    <location>
        <begin position="155"/>
        <end position="162"/>
    </location>
</feature>
<feature type="strand" evidence="7">
    <location>
        <begin position="168"/>
        <end position="173"/>
    </location>
</feature>
<feature type="turn" evidence="7">
    <location>
        <begin position="175"/>
        <end position="177"/>
    </location>
</feature>
<feature type="strand" evidence="7">
    <location>
        <begin position="179"/>
        <end position="186"/>
    </location>
</feature>
<feature type="helix" evidence="7">
    <location>
        <begin position="188"/>
        <end position="198"/>
    </location>
</feature>
<feature type="strand" evidence="7">
    <location>
        <begin position="201"/>
        <end position="204"/>
    </location>
</feature>
<feature type="strand" evidence="7">
    <location>
        <begin position="208"/>
        <end position="213"/>
    </location>
</feature>
<sequence length="216" mass="24547">MEMLPNQTIYINNLNEKIKKEELKKSLYAIFSQFGQILDIVALKTLKMRGQAFVIFKEIGSASNALRTMQGFPFYDKPMQIAYSKSDSDIVAKIKGTFKERPKKVKPPKPAPGTDEKKDKKKKPSSAENSNPNAQTEQPPNQILFLTNLPEETNEMMLSMLFNQFPGFKEVRLVPNRHDIAFVEFTTELQSNAAKEALQGFKITPTHAMKITFAKK</sequence>
<reference key="1">
    <citation type="journal article" date="1992" name="Nucleic Acids Res.">
        <title>RNA binding specificity of a Drosophila snRNP protein that shares sequence homology with mammalian U1-A and U2-B' proteins.</title>
        <authorList>
            <person name="Harper D.S."/>
            <person name="Fresco L.D."/>
            <person name="Keene J.D."/>
        </authorList>
    </citation>
    <scope>NUCLEOTIDE SEQUENCE [MRNA]</scope>
</reference>
<reference key="2">
    <citation type="journal article" date="1994" name="Genes Dev.">
        <title>The Drosophila sex determination gene snf encodes a nuclear protein with sequence and functional similarity to the mammalian U1A snRNP protein.</title>
        <authorList>
            <person name="Flickinger T.W."/>
            <person name="Salz H.K."/>
        </authorList>
    </citation>
    <scope>NUCLEOTIDE SEQUENCE [GENOMIC DNA / MRNA]</scope>
    <scope>FUNCTION</scope>
    <source>
        <strain>Oregon-R</strain>
    </source>
</reference>
<reference key="3">
    <citation type="journal article" date="2000" name="Science">
        <title>The genome sequence of Drosophila melanogaster.</title>
        <authorList>
            <person name="Adams M.D."/>
            <person name="Celniker S.E."/>
            <person name="Holt R.A."/>
            <person name="Evans C.A."/>
            <person name="Gocayne J.D."/>
            <person name="Amanatides P.G."/>
            <person name="Scherer S.E."/>
            <person name="Li P.W."/>
            <person name="Hoskins R.A."/>
            <person name="Galle R.F."/>
            <person name="George R.A."/>
            <person name="Lewis S.E."/>
            <person name="Richards S."/>
            <person name="Ashburner M."/>
            <person name="Henderson S.N."/>
            <person name="Sutton G.G."/>
            <person name="Wortman J.R."/>
            <person name="Yandell M.D."/>
            <person name="Zhang Q."/>
            <person name="Chen L.X."/>
            <person name="Brandon R.C."/>
            <person name="Rogers Y.-H.C."/>
            <person name="Blazej R.G."/>
            <person name="Champe M."/>
            <person name="Pfeiffer B.D."/>
            <person name="Wan K.H."/>
            <person name="Doyle C."/>
            <person name="Baxter E.G."/>
            <person name="Helt G."/>
            <person name="Nelson C.R."/>
            <person name="Miklos G.L.G."/>
            <person name="Abril J.F."/>
            <person name="Agbayani A."/>
            <person name="An H.-J."/>
            <person name="Andrews-Pfannkoch C."/>
            <person name="Baldwin D."/>
            <person name="Ballew R.M."/>
            <person name="Basu A."/>
            <person name="Baxendale J."/>
            <person name="Bayraktaroglu L."/>
            <person name="Beasley E.M."/>
            <person name="Beeson K.Y."/>
            <person name="Benos P.V."/>
            <person name="Berman B.P."/>
            <person name="Bhandari D."/>
            <person name="Bolshakov S."/>
            <person name="Borkova D."/>
            <person name="Botchan M.R."/>
            <person name="Bouck J."/>
            <person name="Brokstein P."/>
            <person name="Brottier P."/>
            <person name="Burtis K.C."/>
            <person name="Busam D.A."/>
            <person name="Butler H."/>
            <person name="Cadieu E."/>
            <person name="Center A."/>
            <person name="Chandra I."/>
            <person name="Cherry J.M."/>
            <person name="Cawley S."/>
            <person name="Dahlke C."/>
            <person name="Davenport L.B."/>
            <person name="Davies P."/>
            <person name="de Pablos B."/>
            <person name="Delcher A."/>
            <person name="Deng Z."/>
            <person name="Mays A.D."/>
            <person name="Dew I."/>
            <person name="Dietz S.M."/>
            <person name="Dodson K."/>
            <person name="Doup L.E."/>
            <person name="Downes M."/>
            <person name="Dugan-Rocha S."/>
            <person name="Dunkov B.C."/>
            <person name="Dunn P."/>
            <person name="Durbin K.J."/>
            <person name="Evangelista C.C."/>
            <person name="Ferraz C."/>
            <person name="Ferriera S."/>
            <person name="Fleischmann W."/>
            <person name="Fosler C."/>
            <person name="Gabrielian A.E."/>
            <person name="Garg N.S."/>
            <person name="Gelbart W.M."/>
            <person name="Glasser K."/>
            <person name="Glodek A."/>
            <person name="Gong F."/>
            <person name="Gorrell J.H."/>
            <person name="Gu Z."/>
            <person name="Guan P."/>
            <person name="Harris M."/>
            <person name="Harris N.L."/>
            <person name="Harvey D.A."/>
            <person name="Heiman T.J."/>
            <person name="Hernandez J.R."/>
            <person name="Houck J."/>
            <person name="Hostin D."/>
            <person name="Houston K.A."/>
            <person name="Howland T.J."/>
            <person name="Wei M.-H."/>
            <person name="Ibegwam C."/>
            <person name="Jalali M."/>
            <person name="Kalush F."/>
            <person name="Karpen G.H."/>
            <person name="Ke Z."/>
            <person name="Kennison J.A."/>
            <person name="Ketchum K.A."/>
            <person name="Kimmel B.E."/>
            <person name="Kodira C.D."/>
            <person name="Kraft C.L."/>
            <person name="Kravitz S."/>
            <person name="Kulp D."/>
            <person name="Lai Z."/>
            <person name="Lasko P."/>
            <person name="Lei Y."/>
            <person name="Levitsky A.A."/>
            <person name="Li J.H."/>
            <person name="Li Z."/>
            <person name="Liang Y."/>
            <person name="Lin X."/>
            <person name="Liu X."/>
            <person name="Mattei B."/>
            <person name="McIntosh T.C."/>
            <person name="McLeod M.P."/>
            <person name="McPherson D."/>
            <person name="Merkulov G."/>
            <person name="Milshina N.V."/>
            <person name="Mobarry C."/>
            <person name="Morris J."/>
            <person name="Moshrefi A."/>
            <person name="Mount S.M."/>
            <person name="Moy M."/>
            <person name="Murphy B."/>
            <person name="Murphy L."/>
            <person name="Muzny D.M."/>
            <person name="Nelson D.L."/>
            <person name="Nelson D.R."/>
            <person name="Nelson K.A."/>
            <person name="Nixon K."/>
            <person name="Nusskern D.R."/>
            <person name="Pacleb J.M."/>
            <person name="Palazzolo M."/>
            <person name="Pittman G.S."/>
            <person name="Pan S."/>
            <person name="Pollard J."/>
            <person name="Puri V."/>
            <person name="Reese M.G."/>
            <person name="Reinert K."/>
            <person name="Remington K."/>
            <person name="Saunders R.D.C."/>
            <person name="Scheeler F."/>
            <person name="Shen H."/>
            <person name="Shue B.C."/>
            <person name="Siden-Kiamos I."/>
            <person name="Simpson M."/>
            <person name="Skupski M.P."/>
            <person name="Smith T.J."/>
            <person name="Spier E."/>
            <person name="Spradling A.C."/>
            <person name="Stapleton M."/>
            <person name="Strong R."/>
            <person name="Sun E."/>
            <person name="Svirskas R."/>
            <person name="Tector C."/>
            <person name="Turner R."/>
            <person name="Venter E."/>
            <person name="Wang A.H."/>
            <person name="Wang X."/>
            <person name="Wang Z.-Y."/>
            <person name="Wassarman D.A."/>
            <person name="Weinstock G.M."/>
            <person name="Weissenbach J."/>
            <person name="Williams S.M."/>
            <person name="Woodage T."/>
            <person name="Worley K.C."/>
            <person name="Wu D."/>
            <person name="Yang S."/>
            <person name="Yao Q.A."/>
            <person name="Ye J."/>
            <person name="Yeh R.-F."/>
            <person name="Zaveri J.S."/>
            <person name="Zhan M."/>
            <person name="Zhang G."/>
            <person name="Zhao Q."/>
            <person name="Zheng L."/>
            <person name="Zheng X.H."/>
            <person name="Zhong F.N."/>
            <person name="Zhong W."/>
            <person name="Zhou X."/>
            <person name="Zhu S.C."/>
            <person name="Zhu X."/>
            <person name="Smith H.O."/>
            <person name="Gibbs R.A."/>
            <person name="Myers E.W."/>
            <person name="Rubin G.M."/>
            <person name="Venter J.C."/>
        </authorList>
    </citation>
    <scope>NUCLEOTIDE SEQUENCE [LARGE SCALE GENOMIC DNA]</scope>
    <source>
        <strain>Berkeley</strain>
    </source>
</reference>
<reference key="4">
    <citation type="journal article" date="2002" name="Genome Biol.">
        <title>Annotation of the Drosophila melanogaster euchromatic genome: a systematic review.</title>
        <authorList>
            <person name="Misra S."/>
            <person name="Crosby M.A."/>
            <person name="Mungall C.J."/>
            <person name="Matthews B.B."/>
            <person name="Campbell K.S."/>
            <person name="Hradecky P."/>
            <person name="Huang Y."/>
            <person name="Kaminker J.S."/>
            <person name="Millburn G.H."/>
            <person name="Prochnik S.E."/>
            <person name="Smith C.D."/>
            <person name="Tupy J.L."/>
            <person name="Whitfield E.J."/>
            <person name="Bayraktaroglu L."/>
            <person name="Berman B.P."/>
            <person name="Bettencourt B.R."/>
            <person name="Celniker S.E."/>
            <person name="de Grey A.D.N.J."/>
            <person name="Drysdale R.A."/>
            <person name="Harris N.L."/>
            <person name="Richter J."/>
            <person name="Russo S."/>
            <person name="Schroeder A.J."/>
            <person name="Shu S.Q."/>
            <person name="Stapleton M."/>
            <person name="Yamada C."/>
            <person name="Ashburner M."/>
            <person name="Gelbart W.M."/>
            <person name="Rubin G.M."/>
            <person name="Lewis S.E."/>
        </authorList>
    </citation>
    <scope>GENOME REANNOTATION</scope>
    <source>
        <strain>Berkeley</strain>
    </source>
</reference>
<reference key="5">
    <citation type="journal article" date="2002" name="Genome Biol.">
        <title>A Drosophila full-length cDNA resource.</title>
        <authorList>
            <person name="Stapleton M."/>
            <person name="Carlson J.W."/>
            <person name="Brokstein P."/>
            <person name="Yu C."/>
            <person name="Champe M."/>
            <person name="George R.A."/>
            <person name="Guarin H."/>
            <person name="Kronmiller B."/>
            <person name="Pacleb J.M."/>
            <person name="Park S."/>
            <person name="Wan K.H."/>
            <person name="Rubin G.M."/>
            <person name="Celniker S.E."/>
        </authorList>
    </citation>
    <scope>NUCLEOTIDE SEQUENCE [LARGE SCALE MRNA]</scope>
    <source>
        <strain>Berkeley</strain>
    </source>
</reference>
<reference key="6">
    <citation type="journal article" date="2008" name="Proc. Natl. Acad. Sci. U.S.A.">
        <title>Evolution of an RNP assembly system: a minimal SMN complex facilitates formation of UsnRNPs in Drosophila melanogaster.</title>
        <authorList>
            <person name="Kroiss M."/>
            <person name="Schultz J."/>
            <person name="Wiesner J."/>
            <person name="Chari A."/>
            <person name="Sickmann A."/>
            <person name="Fischer U."/>
        </authorList>
    </citation>
    <scope>INTERACTION WITH THE SMN COMPLEX</scope>
</reference>
<proteinExistence type="evidence at protein level"/>
<dbReference type="EMBL" id="M89775">
    <property type="protein sequence ID" value="AAA28441.1"/>
    <property type="molecule type" value="mRNA"/>
</dbReference>
<dbReference type="EMBL" id="L29521">
    <property type="protein sequence ID" value="AAA28903.1"/>
    <property type="molecule type" value="Genomic_DNA"/>
</dbReference>
<dbReference type="EMBL" id="AE014298">
    <property type="protein sequence ID" value="AAF46017.1"/>
    <property type="molecule type" value="Genomic_DNA"/>
</dbReference>
<dbReference type="EMBL" id="AY061491">
    <property type="protein sequence ID" value="AAL29039.1"/>
    <property type="molecule type" value="mRNA"/>
</dbReference>
<dbReference type="PIR" id="A54279">
    <property type="entry name" value="A54279"/>
</dbReference>
<dbReference type="RefSeq" id="NP_511045.1">
    <property type="nucleotide sequence ID" value="NM_078490.4"/>
</dbReference>
<dbReference type="PDB" id="2AYM">
    <property type="method" value="NMR"/>
    <property type="chains" value="A=134-216"/>
</dbReference>
<dbReference type="PDB" id="2B0G">
    <property type="method" value="NMR"/>
    <property type="chains" value="A=134-216"/>
</dbReference>
<dbReference type="PDB" id="2K3K">
    <property type="method" value="NMR"/>
    <property type="chains" value="A=1-98"/>
</dbReference>
<dbReference type="PDB" id="6F4G">
    <property type="method" value="X-ray"/>
    <property type="resolution" value="1.90 A"/>
    <property type="chains" value="B/E=1-96"/>
</dbReference>
<dbReference type="PDB" id="6F4H">
    <property type="method" value="X-ray"/>
    <property type="resolution" value="2.00 A"/>
    <property type="chains" value="A/C/E=1-96"/>
</dbReference>
<dbReference type="PDB" id="6F4I">
    <property type="method" value="X-ray"/>
    <property type="resolution" value="1.49 A"/>
    <property type="chains" value="A/B/C/D/E/F=1-96"/>
</dbReference>
<dbReference type="PDB" id="6F4J">
    <property type="method" value="X-ray"/>
    <property type="resolution" value="1.42 A"/>
    <property type="chains" value="C/D=1-96"/>
</dbReference>
<dbReference type="PDBsum" id="2AYM"/>
<dbReference type="PDBsum" id="2B0G"/>
<dbReference type="PDBsum" id="2K3K"/>
<dbReference type="PDBsum" id="6F4G"/>
<dbReference type="PDBsum" id="6F4H"/>
<dbReference type="PDBsum" id="6F4I"/>
<dbReference type="PDBsum" id="6F4J"/>
<dbReference type="BMRB" id="P43332"/>
<dbReference type="SMR" id="P43332"/>
<dbReference type="BioGRID" id="57952">
    <property type="interactions" value="42"/>
</dbReference>
<dbReference type="DIP" id="DIP-23676N"/>
<dbReference type="FunCoup" id="P43332">
    <property type="interactions" value="2448"/>
</dbReference>
<dbReference type="IntAct" id="P43332">
    <property type="interactions" value="106"/>
</dbReference>
<dbReference type="STRING" id="7227.FBpp0070716"/>
<dbReference type="PaxDb" id="7227-FBpp0070716"/>
<dbReference type="DNASU" id="31442"/>
<dbReference type="EnsemblMetazoa" id="FBtr0070748">
    <property type="protein sequence ID" value="FBpp0070716"/>
    <property type="gene ID" value="FBgn0003449"/>
</dbReference>
<dbReference type="GeneID" id="31442"/>
<dbReference type="KEGG" id="dme:Dmel_CG4528"/>
<dbReference type="AGR" id="FB:FBgn0003449"/>
<dbReference type="CTD" id="31442"/>
<dbReference type="FlyBase" id="FBgn0003449">
    <property type="gene designation" value="snf"/>
</dbReference>
<dbReference type="VEuPathDB" id="VectorBase:FBgn0003449"/>
<dbReference type="eggNOG" id="KOG4206">
    <property type="taxonomic scope" value="Eukaryota"/>
</dbReference>
<dbReference type="GeneTree" id="ENSGT00390000007046"/>
<dbReference type="HOGENOM" id="CLU_041869_1_1_1"/>
<dbReference type="InParanoid" id="P43332"/>
<dbReference type="OMA" id="VRMIPTK"/>
<dbReference type="OrthoDB" id="277802at2759"/>
<dbReference type="PhylomeDB" id="P43332"/>
<dbReference type="Reactome" id="R-DME-72163">
    <property type="pathway name" value="mRNA Splicing - Major Pathway"/>
</dbReference>
<dbReference type="BioGRID-ORCS" id="31442">
    <property type="hits" value="1 hit in 3 CRISPR screens"/>
</dbReference>
<dbReference type="ChiTaRS" id="snf">
    <property type="organism name" value="fly"/>
</dbReference>
<dbReference type="EvolutionaryTrace" id="P43332"/>
<dbReference type="GenomeRNAi" id="31442"/>
<dbReference type="PRO" id="PR:P43332"/>
<dbReference type="Proteomes" id="UP000000803">
    <property type="component" value="Chromosome X"/>
</dbReference>
<dbReference type="Bgee" id="FBgn0003449">
    <property type="expression patterns" value="Expressed in eye disc (Drosophila) and 135 other cell types or tissues"/>
</dbReference>
<dbReference type="ExpressionAtlas" id="P43332">
    <property type="expression patterns" value="baseline and differential"/>
</dbReference>
<dbReference type="GO" id="GO:0071013">
    <property type="term" value="C:catalytic step 2 spliceosome"/>
    <property type="evidence" value="ECO:0007005"/>
    <property type="project" value="FlyBase"/>
</dbReference>
<dbReference type="GO" id="GO:0005634">
    <property type="term" value="C:nucleus"/>
    <property type="evidence" value="ECO:0000314"/>
    <property type="project" value="FlyBase"/>
</dbReference>
<dbReference type="GO" id="GO:0071011">
    <property type="term" value="C:precatalytic spliceosome"/>
    <property type="evidence" value="ECO:0007005"/>
    <property type="project" value="FlyBase"/>
</dbReference>
<dbReference type="GO" id="GO:0032991">
    <property type="term" value="C:protein-containing complex"/>
    <property type="evidence" value="ECO:0000353"/>
    <property type="project" value="FlyBase"/>
</dbReference>
<dbReference type="GO" id="GO:1990904">
    <property type="term" value="C:ribonucleoprotein complex"/>
    <property type="evidence" value="ECO:0000314"/>
    <property type="project" value="FlyBase"/>
</dbReference>
<dbReference type="GO" id="GO:0030532">
    <property type="term" value="C:small nuclear ribonucleoprotein complex"/>
    <property type="evidence" value="ECO:0000314"/>
    <property type="project" value="FlyBase"/>
</dbReference>
<dbReference type="GO" id="GO:0005681">
    <property type="term" value="C:spliceosomal complex"/>
    <property type="evidence" value="ECO:0000250"/>
    <property type="project" value="FlyBase"/>
</dbReference>
<dbReference type="GO" id="GO:0005685">
    <property type="term" value="C:U1 snRNP"/>
    <property type="evidence" value="ECO:0000250"/>
    <property type="project" value="FlyBase"/>
</dbReference>
<dbReference type="GO" id="GO:0005686">
    <property type="term" value="C:U2 snRNP"/>
    <property type="evidence" value="ECO:0000250"/>
    <property type="project" value="FlyBase"/>
</dbReference>
<dbReference type="GO" id="GO:0042802">
    <property type="term" value="F:identical protein binding"/>
    <property type="evidence" value="ECO:0000353"/>
    <property type="project" value="FlyBase"/>
</dbReference>
<dbReference type="GO" id="GO:0003729">
    <property type="term" value="F:mRNA binding"/>
    <property type="evidence" value="ECO:0000250"/>
    <property type="project" value="FlyBase"/>
</dbReference>
<dbReference type="GO" id="GO:0008266">
    <property type="term" value="F:poly(U) RNA binding"/>
    <property type="evidence" value="ECO:0000314"/>
    <property type="project" value="FlyBase"/>
</dbReference>
<dbReference type="GO" id="GO:0097158">
    <property type="term" value="F:pre-mRNA intronic pyrimidine-rich binding"/>
    <property type="evidence" value="ECO:0000314"/>
    <property type="project" value="FlyBase"/>
</dbReference>
<dbReference type="GO" id="GO:0035614">
    <property type="term" value="F:snRNA stem-loop binding"/>
    <property type="evidence" value="ECO:0000314"/>
    <property type="project" value="FlyBase"/>
</dbReference>
<dbReference type="GO" id="GO:0030619">
    <property type="term" value="F:U1 snRNA binding"/>
    <property type="evidence" value="ECO:0000314"/>
    <property type="project" value="FlyBase"/>
</dbReference>
<dbReference type="GO" id="GO:0030620">
    <property type="term" value="F:U2 snRNA binding"/>
    <property type="evidence" value="ECO:0000314"/>
    <property type="project" value="FlyBase"/>
</dbReference>
<dbReference type="GO" id="GO:0019099">
    <property type="term" value="P:female germ-line sex determination"/>
    <property type="evidence" value="ECO:0000303"/>
    <property type="project" value="FlyBase"/>
</dbReference>
<dbReference type="GO" id="GO:0000398">
    <property type="term" value="P:mRNA splicing, via spliceosome"/>
    <property type="evidence" value="ECO:0000250"/>
    <property type="project" value="FlyBase"/>
</dbReference>
<dbReference type="GO" id="GO:0048477">
    <property type="term" value="P:oogenesis"/>
    <property type="evidence" value="ECO:0000315"/>
    <property type="project" value="FlyBase"/>
</dbReference>
<dbReference type="GO" id="GO:0007539">
    <property type="term" value="P:primary sex determination, soma"/>
    <property type="evidence" value="ECO:0000303"/>
    <property type="project" value="FlyBase"/>
</dbReference>
<dbReference type="GO" id="GO:0000381">
    <property type="term" value="P:regulation of alternative mRNA splicing, via spliceosome"/>
    <property type="evidence" value="ECO:0000314"/>
    <property type="project" value="FlyBase"/>
</dbReference>
<dbReference type="GO" id="GO:0008380">
    <property type="term" value="P:RNA splicing"/>
    <property type="evidence" value="ECO:0000304"/>
    <property type="project" value="FlyBase"/>
</dbReference>
<dbReference type="CDD" id="cd12476">
    <property type="entry name" value="RRM1_SNF"/>
    <property type="match status" value="1"/>
</dbReference>
<dbReference type="CDD" id="cd12479">
    <property type="entry name" value="RRM2_SNF"/>
    <property type="match status" value="1"/>
</dbReference>
<dbReference type="FunFam" id="3.30.70.330:FF:000039">
    <property type="entry name" value="U1 small nuclear ribonucleoprotein A"/>
    <property type="match status" value="1"/>
</dbReference>
<dbReference type="FunFam" id="3.30.70.330:FF:000029">
    <property type="entry name" value="U2 small nuclear ribonucleoprotein B"/>
    <property type="match status" value="1"/>
</dbReference>
<dbReference type="Gene3D" id="3.30.70.330">
    <property type="match status" value="2"/>
</dbReference>
<dbReference type="InterPro" id="IPR012677">
    <property type="entry name" value="Nucleotide-bd_a/b_plait_sf"/>
</dbReference>
<dbReference type="InterPro" id="IPR035979">
    <property type="entry name" value="RBD_domain_sf"/>
</dbReference>
<dbReference type="InterPro" id="IPR000504">
    <property type="entry name" value="RRM_dom"/>
</dbReference>
<dbReference type="PANTHER" id="PTHR10501">
    <property type="entry name" value="U1 SMALL NUCLEAR RIBONUCLEOPROTEIN A/U2 SMALL NUCLEAR RIBONUCLEOPROTEIN B"/>
    <property type="match status" value="1"/>
</dbReference>
<dbReference type="Pfam" id="PF00076">
    <property type="entry name" value="RRM_1"/>
    <property type="match status" value="2"/>
</dbReference>
<dbReference type="SMART" id="SM00360">
    <property type="entry name" value="RRM"/>
    <property type="match status" value="2"/>
</dbReference>
<dbReference type="SUPFAM" id="SSF54928">
    <property type="entry name" value="RNA-binding domain, RBD"/>
    <property type="match status" value="1"/>
</dbReference>
<dbReference type="PROSITE" id="PS50102">
    <property type="entry name" value="RRM"/>
    <property type="match status" value="2"/>
</dbReference>
<gene>
    <name type="primary">snf</name>
    <name type="synonym">D25</name>
    <name type="synonym">fs(1)1621</name>
    <name type="synonym">liz</name>
    <name type="ORF">CG4528</name>
</gene>
<evidence type="ECO:0000250" key="1"/>
<evidence type="ECO:0000255" key="2">
    <source>
        <dbReference type="PROSITE-ProRule" id="PRU00176"/>
    </source>
</evidence>
<evidence type="ECO:0000256" key="3">
    <source>
        <dbReference type="SAM" id="MobiDB-lite"/>
    </source>
</evidence>
<evidence type="ECO:0000269" key="4">
    <source>
    </source>
</evidence>
<evidence type="ECO:0000269" key="5">
    <source>
    </source>
</evidence>
<evidence type="ECO:0000305" key="6"/>
<evidence type="ECO:0007829" key="7">
    <source>
        <dbReference type="PDB" id="2AYM"/>
    </source>
</evidence>
<evidence type="ECO:0007829" key="8">
    <source>
        <dbReference type="PDB" id="2K3K"/>
    </source>
</evidence>
<evidence type="ECO:0007829" key="9">
    <source>
        <dbReference type="PDB" id="6F4J"/>
    </source>
</evidence>